<gene>
    <name type="primary">EGD1</name>
    <name type="ordered locus">CNBL0980</name>
</gene>
<reference key="1">
    <citation type="journal article" date="2005" name="Science">
        <title>The genome of the basidiomycetous yeast and human pathogen Cryptococcus neoformans.</title>
        <authorList>
            <person name="Loftus B.J."/>
            <person name="Fung E."/>
            <person name="Roncaglia P."/>
            <person name="Rowley D."/>
            <person name="Amedeo P."/>
            <person name="Bruno D."/>
            <person name="Vamathevan J."/>
            <person name="Miranda M."/>
            <person name="Anderson I.J."/>
            <person name="Fraser J.A."/>
            <person name="Allen J.E."/>
            <person name="Bosdet I.E."/>
            <person name="Brent M.R."/>
            <person name="Chiu R."/>
            <person name="Doering T.L."/>
            <person name="Donlin M.J."/>
            <person name="D'Souza C.A."/>
            <person name="Fox D.S."/>
            <person name="Grinberg V."/>
            <person name="Fu J."/>
            <person name="Fukushima M."/>
            <person name="Haas B.J."/>
            <person name="Huang J.C."/>
            <person name="Janbon G."/>
            <person name="Jones S.J.M."/>
            <person name="Koo H.L."/>
            <person name="Krzywinski M.I."/>
            <person name="Kwon-Chung K.J."/>
            <person name="Lengeler K.B."/>
            <person name="Maiti R."/>
            <person name="Marra M.A."/>
            <person name="Marra R.E."/>
            <person name="Mathewson C.A."/>
            <person name="Mitchell T.G."/>
            <person name="Pertea M."/>
            <person name="Riggs F.R."/>
            <person name="Salzberg S.L."/>
            <person name="Schein J.E."/>
            <person name="Shvartsbeyn A."/>
            <person name="Shin H."/>
            <person name="Shumway M."/>
            <person name="Specht C.A."/>
            <person name="Suh B.B."/>
            <person name="Tenney A."/>
            <person name="Utterback T.R."/>
            <person name="Wickes B.L."/>
            <person name="Wortman J.R."/>
            <person name="Wye N.H."/>
            <person name="Kronstad J.W."/>
            <person name="Lodge J.K."/>
            <person name="Heitman J."/>
            <person name="Davis R.W."/>
            <person name="Fraser C.M."/>
            <person name="Hyman R.W."/>
        </authorList>
    </citation>
    <scope>NUCLEOTIDE SEQUENCE [LARGE SCALE GENOMIC DNA]</scope>
    <source>
        <strain>B-3501A</strain>
    </source>
</reference>
<feature type="chain" id="PRO_0000410161" description="Nascent polypeptide-associated complex subunit beta">
    <location>
        <begin position="1"/>
        <end position="175"/>
    </location>
</feature>
<feature type="domain" description="NAC-A/B" evidence="2">
    <location>
        <begin position="34"/>
        <end position="101"/>
    </location>
</feature>
<feature type="region of interest" description="Disordered" evidence="3">
    <location>
        <begin position="1"/>
        <end position="36"/>
    </location>
</feature>
<feature type="region of interest" description="Disordered" evidence="3">
    <location>
        <begin position="129"/>
        <end position="175"/>
    </location>
</feature>
<feature type="compositionally biased region" description="Acidic residues" evidence="3">
    <location>
        <begin position="149"/>
        <end position="163"/>
    </location>
</feature>
<feature type="compositionally biased region" description="Basic and acidic residues" evidence="3">
    <location>
        <begin position="164"/>
        <end position="175"/>
    </location>
</feature>
<keyword id="KW-0963">Cytoplasm</keyword>
<keyword id="KW-0539">Nucleus</keyword>
<keyword id="KW-0653">Protein transport</keyword>
<keyword id="KW-0678">Repressor</keyword>
<keyword id="KW-0804">Transcription</keyword>
<keyword id="KW-0805">Transcription regulation</keyword>
<keyword id="KW-0813">Transport</keyword>
<accession>P0CP09</accession>
<accession>Q55J87</accession>
<accession>Q5KCH5</accession>
<evidence type="ECO:0000250" key="1"/>
<evidence type="ECO:0000255" key="2">
    <source>
        <dbReference type="PROSITE-ProRule" id="PRU00507"/>
    </source>
</evidence>
<evidence type="ECO:0000256" key="3">
    <source>
        <dbReference type="SAM" id="MobiDB-lite"/>
    </source>
</evidence>
<evidence type="ECO:0000305" key="4"/>
<comment type="function">
    <text evidence="1">Component of the nascent polypeptide-associated complex (NAC), a dynamic component of the ribosomal exit tunnel, protecting the emerging polypeptides from interaction with other cytoplasmic proteins to ensure appropriate nascent protein targeting. The NAC complex also promotes mitochondrial protein import by enhancing productive ribosome interactions with the outer mitochondrial membrane and blocks the inappropriate interaction of ribosomes translating non-secretory nascent polypeptides with translocation sites in the membrane of the endoplasmic reticulum. EGD1 may act as a transcription factor that exert a negative effect on the expression of several genes that are transcribed by RNA polymerase II.</text>
</comment>
<comment type="subunit">
    <text evidence="1">Part of the nascent polypeptide-associated complex (NAC), consisting of EGD2 and EGD1. NAC associates with ribosomes via EGD1 (By similarity).</text>
</comment>
<comment type="subcellular location">
    <subcellularLocation>
        <location evidence="1">Cytoplasm</location>
    </subcellularLocation>
    <subcellularLocation>
        <location evidence="1">Nucleus</location>
    </subcellularLocation>
    <text evidence="1">Predominantly cytoplasmic, may also transiently localize to the nucleus.</text>
</comment>
<comment type="similarity">
    <text evidence="4">Belongs to the NAC-beta family.</text>
</comment>
<name>NACB_CRYNB</name>
<proteinExistence type="inferred from homology"/>
<organism>
    <name type="scientific">Cryptococcus neoformans var. neoformans serotype D (strain B-3501A)</name>
    <name type="common">Filobasidiella neoformans</name>
    <dbReference type="NCBI Taxonomy" id="283643"/>
    <lineage>
        <taxon>Eukaryota</taxon>
        <taxon>Fungi</taxon>
        <taxon>Dikarya</taxon>
        <taxon>Basidiomycota</taxon>
        <taxon>Agaricomycotina</taxon>
        <taxon>Tremellomycetes</taxon>
        <taxon>Tremellales</taxon>
        <taxon>Cryptococcaceae</taxon>
        <taxon>Cryptococcus</taxon>
        <taxon>Cryptococcus neoformans species complex</taxon>
    </lineage>
</organism>
<protein>
    <recommendedName>
        <fullName>Nascent polypeptide-associated complex subunit beta</fullName>
        <shortName>NAC-beta</shortName>
    </recommendedName>
    <alternativeName>
        <fullName>Beta-NAC</fullName>
    </alternativeName>
</protein>
<sequence>MDKEKLAKLQSQVRIGGKGTPRRKVVKKSVTSSQGDDRKLQAALKKLGVQPITGVEEVNMFKEDGNVLHFGAPRVQVHAALPSNTLAIYGPGQTKELTELVPGILNQLGPDSLANLRRLAESYQSLTARQAAAAAGSGGEGAGEAKEGEGDDEIPDLVDNFDEAEVKKSDLEELE</sequence>
<dbReference type="EMBL" id="AAEY01000056">
    <property type="protein sequence ID" value="EAL17836.1"/>
    <property type="molecule type" value="Genomic_DNA"/>
</dbReference>
<dbReference type="RefSeq" id="XP_772483.1">
    <property type="nucleotide sequence ID" value="XM_767390.1"/>
</dbReference>
<dbReference type="SMR" id="P0CP09"/>
<dbReference type="EnsemblFungi" id="AAW44989">
    <property type="protein sequence ID" value="AAW44989"/>
    <property type="gene ID" value="CNH01040"/>
</dbReference>
<dbReference type="GeneID" id="4939147"/>
<dbReference type="KEGG" id="cnb:CNBL0980"/>
<dbReference type="VEuPathDB" id="FungiDB:CNBL0980"/>
<dbReference type="HOGENOM" id="CLU_098726_2_0_1"/>
<dbReference type="GO" id="GO:0005854">
    <property type="term" value="C:nascent polypeptide-associated complex"/>
    <property type="evidence" value="ECO:0007669"/>
    <property type="project" value="EnsemblFungi"/>
</dbReference>
<dbReference type="GO" id="GO:0005634">
    <property type="term" value="C:nucleus"/>
    <property type="evidence" value="ECO:0007669"/>
    <property type="project" value="UniProtKB-SubCell"/>
</dbReference>
<dbReference type="GO" id="GO:0015031">
    <property type="term" value="P:protein transport"/>
    <property type="evidence" value="ECO:0007669"/>
    <property type="project" value="UniProtKB-KW"/>
</dbReference>
<dbReference type="CDD" id="cd22055">
    <property type="entry name" value="NAC_BTF3"/>
    <property type="match status" value="1"/>
</dbReference>
<dbReference type="FunFam" id="2.20.70.30:FF:000003">
    <property type="entry name" value="Nascent polypeptide-associated complex subunit beta"/>
    <property type="match status" value="1"/>
</dbReference>
<dbReference type="Gene3D" id="2.20.70.30">
    <property type="entry name" value="Nascent polypeptide-associated complex domain"/>
    <property type="match status" value="1"/>
</dbReference>
<dbReference type="InterPro" id="IPR039370">
    <property type="entry name" value="BTF3"/>
</dbReference>
<dbReference type="InterPro" id="IPR038187">
    <property type="entry name" value="NAC_A/B_dom_sf"/>
</dbReference>
<dbReference type="InterPro" id="IPR002715">
    <property type="entry name" value="Nas_poly-pep-assoc_cplx_dom"/>
</dbReference>
<dbReference type="PANTHER" id="PTHR10351">
    <property type="entry name" value="TRANSCRIPTION FACTOR BTF3 FAMILY MEMBER"/>
    <property type="match status" value="1"/>
</dbReference>
<dbReference type="Pfam" id="PF01849">
    <property type="entry name" value="NAC"/>
    <property type="match status" value="1"/>
</dbReference>
<dbReference type="SMART" id="SM01407">
    <property type="entry name" value="NAC"/>
    <property type="match status" value="1"/>
</dbReference>
<dbReference type="PROSITE" id="PS51151">
    <property type="entry name" value="NAC_AB"/>
    <property type="match status" value="1"/>
</dbReference>